<comment type="function">
    <text evidence="2 4">Lipoamide dehydrogenase is a component of the glycine decarboxylase (GDC) or glycine cleavage system as well as of the alpha-ketoacid dehydrogenase complexes. LPD1 is probably the protein most often associated with the glycine decarboxylase complex while LPD2 is probably incorporated into alpha-ketoacid dehydrogenase complexes.</text>
</comment>
<comment type="catalytic activity">
    <reaction evidence="2">
        <text>N(6)-[(R)-dihydrolipoyl]-L-lysyl-[protein] + NAD(+) = N(6)-[(R)-lipoyl]-L-lysyl-[protein] + NADH + H(+)</text>
        <dbReference type="Rhea" id="RHEA:15045"/>
        <dbReference type="Rhea" id="RHEA-COMP:10474"/>
        <dbReference type="Rhea" id="RHEA-COMP:10475"/>
        <dbReference type="ChEBI" id="CHEBI:15378"/>
        <dbReference type="ChEBI" id="CHEBI:57540"/>
        <dbReference type="ChEBI" id="CHEBI:57945"/>
        <dbReference type="ChEBI" id="CHEBI:83099"/>
        <dbReference type="ChEBI" id="CHEBI:83100"/>
        <dbReference type="EC" id="1.8.1.4"/>
    </reaction>
</comment>
<comment type="cofactor">
    <cofactor evidence="1">
        <name>FAD</name>
        <dbReference type="ChEBI" id="CHEBI:57692"/>
    </cofactor>
    <text evidence="1">Binds 1 FAD per subunit.</text>
</comment>
<comment type="subunit">
    <text evidence="1">Homodimer (By similarity). Part of both the glycine cleavage system composed of four proteins: P, T, L and H and of the pyruvate dehydrogenase complex containing multiple copies of three enzymatic components: pyruvate dehydrogenase (E1), dihydrolipoamide acetyltransferase (E2) and lipoamide dehydrogenase (E3).</text>
</comment>
<comment type="subcellular location">
    <subcellularLocation>
        <location evidence="3 4 10">Mitochondrion matrix</location>
    </subcellularLocation>
</comment>
<comment type="alternative products">
    <event type="alternative splicing"/>
    <isoform>
        <id>Q9M5K2-1</id>
        <name>1</name>
        <sequence type="displayed"/>
    </isoform>
    <isoform>
        <id>Q9M5K2-2</id>
        <name>2</name>
        <sequence type="described" ref="VSP_021588 VSP_021589"/>
    </isoform>
</comment>
<comment type="tissue specificity">
    <text evidence="2">Preferentially expressed in roots, flowers and siliques and at a lower level in stems and leaves.</text>
</comment>
<comment type="induction">
    <text evidence="5">Induced by cadmium.</text>
</comment>
<comment type="PTM">
    <text>S-nytrosylated at unknown positions.</text>
</comment>
<comment type="disruption phenotype">
    <text evidence="2">No visible phenotype, probably due to redundancy with LPD1.</text>
</comment>
<comment type="miscellaneous">
    <text>The active site is a redox-active disulfide bond.</text>
</comment>
<comment type="miscellaneous">
    <molecule>Isoform 2</molecule>
    <text evidence="9">May be due to an intron retention.</text>
</comment>
<comment type="similarity">
    <text evidence="9">Belongs to the class-I pyridine nucleotide-disulfide oxidoreductase family.</text>
</comment>
<proteinExistence type="evidence at protein level"/>
<feature type="transit peptide" description="Mitochondrion" evidence="6">
    <location>
        <begin position="1"/>
        <end position="36"/>
    </location>
</feature>
<feature type="chain" id="PRO_0000260230" description="Dihydrolipoyl dehydrogenase 2, mitochondrial">
    <location>
        <begin position="37"/>
        <end position="507"/>
    </location>
</feature>
<feature type="active site" description="Proton acceptor" evidence="1">
    <location>
        <position position="486"/>
    </location>
</feature>
<feature type="binding site" evidence="1">
    <location>
        <begin position="73"/>
        <end position="82"/>
    </location>
    <ligand>
        <name>FAD</name>
        <dbReference type="ChEBI" id="CHEBI:57692"/>
    </ligand>
</feature>
<feature type="binding site" evidence="1">
    <location>
        <position position="91"/>
    </location>
    <ligand>
        <name>FAD</name>
        <dbReference type="ChEBI" id="CHEBI:57692"/>
    </ligand>
</feature>
<feature type="binding site" evidence="1">
    <location>
        <position position="155"/>
    </location>
    <ligand>
        <name>FAD</name>
        <dbReference type="ChEBI" id="CHEBI:57692"/>
    </ligand>
</feature>
<feature type="binding site" evidence="1">
    <location>
        <begin position="184"/>
        <end position="186"/>
    </location>
    <ligand>
        <name>FAD</name>
        <dbReference type="ChEBI" id="CHEBI:57692"/>
    </ligand>
</feature>
<feature type="binding site" evidence="1">
    <location>
        <begin position="221"/>
        <end position="228"/>
    </location>
    <ligand>
        <name>NAD(+)</name>
        <dbReference type="ChEBI" id="CHEBI:57540"/>
    </ligand>
</feature>
<feature type="binding site" evidence="1">
    <location>
        <position position="244"/>
    </location>
    <ligand>
        <name>NAD(+)</name>
        <dbReference type="ChEBI" id="CHEBI:57540"/>
    </ligand>
</feature>
<feature type="binding site" evidence="1">
    <location>
        <position position="278"/>
    </location>
    <ligand>
        <name>NAD(+)</name>
        <dbReference type="ChEBI" id="CHEBI:57540"/>
    </ligand>
</feature>
<feature type="binding site" evidence="1">
    <location>
        <position position="313"/>
    </location>
    <ligand>
        <name>NAD(+)</name>
        <dbReference type="ChEBI" id="CHEBI:57540"/>
    </ligand>
</feature>
<feature type="binding site" evidence="1">
    <location>
        <position position="354"/>
    </location>
    <ligand>
        <name>FAD</name>
        <dbReference type="ChEBI" id="CHEBI:57692"/>
    </ligand>
</feature>
<feature type="binding site" evidence="1">
    <location>
        <begin position="360"/>
        <end position="363"/>
    </location>
    <ligand>
        <name>FAD</name>
        <dbReference type="ChEBI" id="CHEBI:57692"/>
    </ligand>
</feature>
<feature type="disulfide bond" description="Redox-active" evidence="1">
    <location>
        <begin position="82"/>
        <end position="87"/>
    </location>
</feature>
<feature type="splice variant" id="VSP_021588" description="In isoform 2." evidence="7 8">
    <original>ALLHSSHMYHEAKHVFANHGVKVSSVEVDLPAMLAQ</original>
    <variation>VILETPFPITLIRRKFSPIFIRLLWNLLVDHHLDSI</variation>
    <location>
        <begin position="92"/>
        <end position="127"/>
    </location>
</feature>
<feature type="splice variant" id="VSP_021589" description="In isoform 2." evidence="7 8">
    <location>
        <begin position="128"/>
        <end position="507"/>
    </location>
</feature>
<gene>
    <name type="primary">LPD2</name>
    <name type="ordered locus">At3g17240</name>
    <name type="ORF">MGD8.7</name>
</gene>
<protein>
    <recommendedName>
        <fullName>Dihydrolipoyl dehydrogenase 2, mitochondrial</fullName>
        <shortName>AtmLPD2</shortName>
        <shortName>mtLPD2</shortName>
        <ecNumber evidence="2">1.8.1.4</ecNumber>
    </recommendedName>
    <alternativeName>
        <fullName>Dihydrolipoamide dehydrogenase 2</fullName>
    </alternativeName>
    <alternativeName>
        <fullName>Glycine cleavage system L protein 2</fullName>
    </alternativeName>
    <alternativeName>
        <fullName>Pyruvate dehydrogenase complex E3 subunit 2</fullName>
        <shortName>E3-2</shortName>
        <shortName>PDC-E3 2</shortName>
    </alternativeName>
</protein>
<keyword id="KW-0025">Alternative splicing</keyword>
<keyword id="KW-1015">Disulfide bond</keyword>
<keyword id="KW-0274">FAD</keyword>
<keyword id="KW-0285">Flavoprotein</keyword>
<keyword id="KW-0496">Mitochondrion</keyword>
<keyword id="KW-0520">NAD</keyword>
<keyword id="KW-0560">Oxidoreductase</keyword>
<keyword id="KW-0676">Redox-active center</keyword>
<keyword id="KW-1185">Reference proteome</keyword>
<keyword id="KW-0809">Transit peptide</keyword>
<accession>Q9M5K2</accession>
<accession>Q8LBH6</accession>
<accession>Q9ZRQ0</accession>
<evidence type="ECO:0000250" key="1"/>
<evidence type="ECO:0000269" key="2">
    <source>
    </source>
</evidence>
<evidence type="ECO:0000269" key="3">
    <source>
    </source>
</evidence>
<evidence type="ECO:0000269" key="4">
    <source>
    </source>
</evidence>
<evidence type="ECO:0000269" key="5">
    <source>
    </source>
</evidence>
<evidence type="ECO:0000269" key="6">
    <source>
    </source>
</evidence>
<evidence type="ECO:0000303" key="7">
    <source ref="4"/>
</evidence>
<evidence type="ECO:0000303" key="8">
    <source ref="5"/>
</evidence>
<evidence type="ECO:0000305" key="9"/>
<evidence type="ECO:0000305" key="10">
    <source>
    </source>
</evidence>
<sequence length="507" mass="53986">MAMASLARRKAYFLTRNISNSPTDAFRFSFSLTRGFASSGSDDNDVVIIGGGPGGYVAAIKAAQLGLKTTCIEKRGALGGTCLNVGCIPSKALLHSSHMYHEAKHVFANHGVKVSSVEVDLPAMLAQKDTAVKNLTRGVEGLFKKNKVNYVKGYGKFLSPSEVSVDTIDGENVVVKGKHIIVATGSDVKSLPGITIDEKKIVSSTGALSLTEIPKKLIVIGAGYIGLEMGSVWGRLGSEVTVVEFAADIVPAMDGEIRKQFQRSLEKQKMKFMLKTKVVGVDSSGDGVKLIVEPAEGGEQTTLEADVVLVSAGRTPFTSGLDLEKIGVETDKGGRILVNERFSTNVSGVYAIGDVIPGPMLAHKAEEDGVACVEFIAGKHGHVDYDKVPGVVYTYPEVASVGKTEEQLKKEGVSYNVGKFPFMANSRAKAIDTAEGMVKILADKETDKILGVHIMSPNAGELIHEAVLAINYDASSEDIARVCHAHPTMSEAIKEAAMATYDKPIHM</sequence>
<organism>
    <name type="scientific">Arabidopsis thaliana</name>
    <name type="common">Mouse-ear cress</name>
    <dbReference type="NCBI Taxonomy" id="3702"/>
    <lineage>
        <taxon>Eukaryota</taxon>
        <taxon>Viridiplantae</taxon>
        <taxon>Streptophyta</taxon>
        <taxon>Embryophyta</taxon>
        <taxon>Tracheophyta</taxon>
        <taxon>Spermatophyta</taxon>
        <taxon>Magnoliopsida</taxon>
        <taxon>eudicotyledons</taxon>
        <taxon>Gunneridae</taxon>
        <taxon>Pentapetalae</taxon>
        <taxon>rosids</taxon>
        <taxon>malvids</taxon>
        <taxon>Brassicales</taxon>
        <taxon>Brassicaceae</taxon>
        <taxon>Camelineae</taxon>
        <taxon>Arabidopsis</taxon>
    </lineage>
</organism>
<dbReference type="EC" id="1.8.1.4" evidence="2"/>
<dbReference type="EMBL" id="AF228640">
    <property type="protein sequence ID" value="AAF34796.1"/>
    <property type="molecule type" value="mRNA"/>
</dbReference>
<dbReference type="EMBL" id="AB022216">
    <property type="status" value="NOT_ANNOTATED_CDS"/>
    <property type="molecule type" value="Genomic_DNA"/>
</dbReference>
<dbReference type="EMBL" id="CP002686">
    <property type="protein sequence ID" value="AEE75925.1"/>
    <property type="molecule type" value="Genomic_DNA"/>
</dbReference>
<dbReference type="EMBL" id="CP002686">
    <property type="protein sequence ID" value="AEE75926.1"/>
    <property type="molecule type" value="Genomic_DNA"/>
</dbReference>
<dbReference type="EMBL" id="CP002686">
    <property type="protein sequence ID" value="AEE75927.1"/>
    <property type="molecule type" value="Genomic_DNA"/>
</dbReference>
<dbReference type="EMBL" id="BT024578">
    <property type="protein sequence ID" value="ABD38917.1"/>
    <property type="molecule type" value="mRNA"/>
</dbReference>
<dbReference type="EMBL" id="AY087203">
    <property type="protein sequence ID" value="AAM64759.1"/>
    <property type="molecule type" value="mRNA"/>
</dbReference>
<dbReference type="EMBL" id="AJ223804">
    <property type="protein sequence ID" value="CAA11554.1"/>
    <property type="molecule type" value="mRNA"/>
</dbReference>
<dbReference type="RefSeq" id="NP_566570.3">
    <molecule id="Q9M5K2-1"/>
    <property type="nucleotide sequence ID" value="NM_112601.3"/>
</dbReference>
<dbReference type="RefSeq" id="NP_566571.1">
    <molecule id="Q9M5K2-2"/>
    <property type="nucleotide sequence ID" value="NM_112602.2"/>
</dbReference>
<dbReference type="RefSeq" id="NP_851005.1">
    <molecule id="Q9M5K2-1"/>
    <property type="nucleotide sequence ID" value="NM_180674.4"/>
</dbReference>
<dbReference type="SMR" id="Q9M5K2"/>
<dbReference type="BioGRID" id="6317">
    <property type="interactions" value="8"/>
</dbReference>
<dbReference type="FunCoup" id="Q9M5K2">
    <property type="interactions" value="3224"/>
</dbReference>
<dbReference type="IntAct" id="Q9M5K2">
    <property type="interactions" value="1"/>
</dbReference>
<dbReference type="STRING" id="3702.Q9M5K2"/>
<dbReference type="iPTMnet" id="Q9M5K2"/>
<dbReference type="MetOSite" id="Q9M5K2"/>
<dbReference type="PaxDb" id="3702-AT3G17240.1"/>
<dbReference type="ProteomicsDB" id="222210">
    <molecule id="Q9M5K2-1"/>
</dbReference>
<dbReference type="EnsemblPlants" id="AT3G17240.1">
    <molecule id="Q9M5K2-1"/>
    <property type="protein sequence ID" value="AT3G17240.1"/>
    <property type="gene ID" value="AT3G17240"/>
</dbReference>
<dbReference type="EnsemblPlants" id="AT3G17240.2">
    <molecule id="Q9M5K2-2"/>
    <property type="protein sequence ID" value="AT3G17240.2"/>
    <property type="gene ID" value="AT3G17240"/>
</dbReference>
<dbReference type="EnsemblPlants" id="AT3G17240.3">
    <molecule id="Q9M5K2-1"/>
    <property type="protein sequence ID" value="AT3G17240.3"/>
    <property type="gene ID" value="AT3G17240"/>
</dbReference>
<dbReference type="Gramene" id="AT3G17240.1">
    <molecule id="Q9M5K2-1"/>
    <property type="protein sequence ID" value="AT3G17240.1"/>
    <property type="gene ID" value="AT3G17240"/>
</dbReference>
<dbReference type="Gramene" id="AT3G17240.2">
    <molecule id="Q9M5K2-2"/>
    <property type="protein sequence ID" value="AT3G17240.2"/>
    <property type="gene ID" value="AT3G17240"/>
</dbReference>
<dbReference type="Gramene" id="AT3G17240.3">
    <molecule id="Q9M5K2-1"/>
    <property type="protein sequence ID" value="AT3G17240.3"/>
    <property type="gene ID" value="AT3G17240"/>
</dbReference>
<dbReference type="KEGG" id="ath:AT3G17240"/>
<dbReference type="Araport" id="AT3G17240"/>
<dbReference type="TAIR" id="AT3G17240">
    <property type="gene designation" value="MTLPD2"/>
</dbReference>
<dbReference type="eggNOG" id="KOG1335">
    <property type="taxonomic scope" value="Eukaryota"/>
</dbReference>
<dbReference type="HOGENOM" id="CLU_016755_0_1_1"/>
<dbReference type="InParanoid" id="Q9M5K2"/>
<dbReference type="OMA" id="GLEFHFG"/>
<dbReference type="OrthoDB" id="361797at2759"/>
<dbReference type="PhylomeDB" id="Q9M5K2"/>
<dbReference type="BRENDA" id="1.8.1.4">
    <property type="organism ID" value="399"/>
</dbReference>
<dbReference type="CD-CODE" id="4299E36E">
    <property type="entry name" value="Nucleolus"/>
</dbReference>
<dbReference type="PRO" id="PR:Q9M5K2"/>
<dbReference type="Proteomes" id="UP000006548">
    <property type="component" value="Chromosome 3"/>
</dbReference>
<dbReference type="ExpressionAtlas" id="Q9M5K2">
    <property type="expression patterns" value="baseline and differential"/>
</dbReference>
<dbReference type="GO" id="GO:0005829">
    <property type="term" value="C:cytosol"/>
    <property type="evidence" value="ECO:0007005"/>
    <property type="project" value="TAIR"/>
</dbReference>
<dbReference type="GO" id="GO:0005759">
    <property type="term" value="C:mitochondrial matrix"/>
    <property type="evidence" value="ECO:0007669"/>
    <property type="project" value="UniProtKB-SubCell"/>
</dbReference>
<dbReference type="GO" id="GO:0005739">
    <property type="term" value="C:mitochondrion"/>
    <property type="evidence" value="ECO:0000314"/>
    <property type="project" value="TAIR"/>
</dbReference>
<dbReference type="GO" id="GO:0005524">
    <property type="term" value="F:ATP binding"/>
    <property type="evidence" value="ECO:0007005"/>
    <property type="project" value="TAIR"/>
</dbReference>
<dbReference type="GO" id="GO:0050897">
    <property type="term" value="F:cobalt ion binding"/>
    <property type="evidence" value="ECO:0007005"/>
    <property type="project" value="TAIR"/>
</dbReference>
<dbReference type="GO" id="GO:0005507">
    <property type="term" value="F:copper ion binding"/>
    <property type="evidence" value="ECO:0007005"/>
    <property type="project" value="TAIR"/>
</dbReference>
<dbReference type="GO" id="GO:0004148">
    <property type="term" value="F:dihydrolipoyl dehydrogenase (NADH) activity"/>
    <property type="evidence" value="ECO:0000315"/>
    <property type="project" value="TAIR"/>
</dbReference>
<dbReference type="GO" id="GO:0050660">
    <property type="term" value="F:flavin adenine dinucleotide binding"/>
    <property type="evidence" value="ECO:0007669"/>
    <property type="project" value="InterPro"/>
</dbReference>
<dbReference type="GO" id="GO:0008270">
    <property type="term" value="F:zinc ion binding"/>
    <property type="evidence" value="ECO:0007005"/>
    <property type="project" value="TAIR"/>
</dbReference>
<dbReference type="FunFam" id="3.30.390.30:FF:000001">
    <property type="entry name" value="Dihydrolipoyl dehydrogenase"/>
    <property type="match status" value="1"/>
</dbReference>
<dbReference type="FunFam" id="3.50.50.60:FF:000001">
    <property type="entry name" value="Dihydrolipoyl dehydrogenase, mitochondrial"/>
    <property type="match status" value="1"/>
</dbReference>
<dbReference type="Gene3D" id="3.30.390.30">
    <property type="match status" value="1"/>
</dbReference>
<dbReference type="Gene3D" id="3.50.50.60">
    <property type="entry name" value="FAD/NAD(P)-binding domain"/>
    <property type="match status" value="2"/>
</dbReference>
<dbReference type="InterPro" id="IPR050151">
    <property type="entry name" value="Class-I_Pyr_Nuc-Dis_Oxidored"/>
</dbReference>
<dbReference type="InterPro" id="IPR036188">
    <property type="entry name" value="FAD/NAD-bd_sf"/>
</dbReference>
<dbReference type="InterPro" id="IPR023753">
    <property type="entry name" value="FAD/NAD-binding_dom"/>
</dbReference>
<dbReference type="InterPro" id="IPR016156">
    <property type="entry name" value="FAD/NAD-linked_Rdtase_dimer_sf"/>
</dbReference>
<dbReference type="InterPro" id="IPR006258">
    <property type="entry name" value="Lipoamide_DH"/>
</dbReference>
<dbReference type="InterPro" id="IPR001100">
    <property type="entry name" value="Pyr_nuc-diS_OxRdtase"/>
</dbReference>
<dbReference type="InterPro" id="IPR004099">
    <property type="entry name" value="Pyr_nucl-diS_OxRdtase_dimer"/>
</dbReference>
<dbReference type="InterPro" id="IPR012999">
    <property type="entry name" value="Pyr_OxRdtase_I_AS"/>
</dbReference>
<dbReference type="NCBIfam" id="TIGR01350">
    <property type="entry name" value="lipoamide_DH"/>
    <property type="match status" value="1"/>
</dbReference>
<dbReference type="PANTHER" id="PTHR22912:SF211">
    <property type="entry name" value="DIHYDROLIPOYL DEHYDROGENASE 2, MITOCHONDRIAL"/>
    <property type="match status" value="1"/>
</dbReference>
<dbReference type="PANTHER" id="PTHR22912">
    <property type="entry name" value="DISULFIDE OXIDOREDUCTASE"/>
    <property type="match status" value="1"/>
</dbReference>
<dbReference type="Pfam" id="PF07992">
    <property type="entry name" value="Pyr_redox_2"/>
    <property type="match status" value="1"/>
</dbReference>
<dbReference type="Pfam" id="PF02852">
    <property type="entry name" value="Pyr_redox_dim"/>
    <property type="match status" value="1"/>
</dbReference>
<dbReference type="PIRSF" id="PIRSF000350">
    <property type="entry name" value="Mercury_reductase_MerA"/>
    <property type="match status" value="1"/>
</dbReference>
<dbReference type="PRINTS" id="PR00368">
    <property type="entry name" value="FADPNR"/>
</dbReference>
<dbReference type="PRINTS" id="PR00411">
    <property type="entry name" value="PNDRDTASEI"/>
</dbReference>
<dbReference type="SUPFAM" id="SSF51905">
    <property type="entry name" value="FAD/NAD(P)-binding domain"/>
    <property type="match status" value="1"/>
</dbReference>
<dbReference type="SUPFAM" id="SSF55424">
    <property type="entry name" value="FAD/NAD-linked reductases, dimerisation (C-terminal) domain"/>
    <property type="match status" value="1"/>
</dbReference>
<dbReference type="PROSITE" id="PS00076">
    <property type="entry name" value="PYRIDINE_REDOX_1"/>
    <property type="match status" value="1"/>
</dbReference>
<name>DLDH2_ARATH</name>
<reference key="1">
    <citation type="journal article" date="2001" name="Plant Physiol.">
        <title>Characterization of two cDNAs encoding mitochondrial lipoamide dehydrogenase from Arabidopsis.</title>
        <authorList>
            <person name="Lutziger I."/>
            <person name="Oliver D.J."/>
        </authorList>
    </citation>
    <scope>NUCLEOTIDE SEQUENCE [MRNA] (ISOFORM 1)</scope>
    <scope>FUNCTION</scope>
    <scope>CATALYTIC ACTIVITY</scope>
    <scope>TISSUE SPECIFICITY</scope>
    <scope>DISRUPTION PHENOTYPE</scope>
</reference>
<reference key="2">
    <citation type="journal article" date="2000" name="DNA Res.">
        <title>Structural analysis of Arabidopsis thaliana chromosome 3. I. Sequence features of the regions of 4,504,864 bp covered by sixty P1 and TAC clones.</title>
        <authorList>
            <person name="Sato S."/>
            <person name="Nakamura Y."/>
            <person name="Kaneko T."/>
            <person name="Katoh T."/>
            <person name="Asamizu E."/>
            <person name="Tabata S."/>
        </authorList>
    </citation>
    <scope>NUCLEOTIDE SEQUENCE [LARGE SCALE GENOMIC DNA]</scope>
    <source>
        <strain>cv. Columbia</strain>
    </source>
</reference>
<reference key="3">
    <citation type="journal article" date="2017" name="Plant J.">
        <title>Araport11: a complete reannotation of the Arabidopsis thaliana reference genome.</title>
        <authorList>
            <person name="Cheng C.Y."/>
            <person name="Krishnakumar V."/>
            <person name="Chan A.P."/>
            <person name="Thibaud-Nissen F."/>
            <person name="Schobel S."/>
            <person name="Town C.D."/>
        </authorList>
    </citation>
    <scope>GENOME REANNOTATION</scope>
    <source>
        <strain>cv. Columbia</strain>
    </source>
</reference>
<reference key="4">
    <citation type="submission" date="2006-02" db="EMBL/GenBank/DDBJ databases">
        <title>Arabidopsis ORF clones.</title>
        <authorList>
            <person name="Shinn P."/>
            <person name="Chen H."/>
            <person name="Kim C.J."/>
            <person name="Ecker J.R."/>
        </authorList>
    </citation>
    <scope>NUCLEOTIDE SEQUENCE [LARGE SCALE MRNA] (ISOFORM 2)</scope>
    <source>
        <strain>cv. Columbia</strain>
    </source>
</reference>
<reference key="5">
    <citation type="submission" date="2002-03" db="EMBL/GenBank/DDBJ databases">
        <title>Full-length cDNA from Arabidopsis thaliana.</title>
        <authorList>
            <person name="Brover V.V."/>
            <person name="Troukhan M.E."/>
            <person name="Alexandrov N.A."/>
            <person name="Lu Y.-P."/>
            <person name="Flavell R.B."/>
            <person name="Feldmann K.A."/>
        </authorList>
    </citation>
    <scope>NUCLEOTIDE SEQUENCE [LARGE SCALE MRNA] (ISOFORM 2)</scope>
</reference>
<reference key="6">
    <citation type="submission" date="1998-01" db="EMBL/GenBank/DDBJ databases">
        <title>Cloning and characterization of 2-oxoglutarate dehydrogenase from Arabidopsis thaliana.</title>
        <authorList>
            <person name="Machuy N."/>
            <person name="Klein M."/>
            <person name="Mueller-Roeber B."/>
        </authorList>
    </citation>
    <scope>NUCLEOTIDE SEQUENCE [MRNA] OF 36-507 (ISOFORM 1)</scope>
    <source>
        <strain>cv. Columbia</strain>
    </source>
</reference>
<reference key="7">
    <citation type="journal article" date="2001" name="Trends Plant Sci.">
        <title>The glycine decarboxylase system: a fascinating complex.</title>
        <authorList>
            <person name="Douce R."/>
            <person name="Bourguignon J."/>
            <person name="Neuburger M."/>
            <person name="Rebeille F."/>
        </authorList>
    </citation>
    <scope>REVIEW</scope>
</reference>
<reference key="8">
    <citation type="journal article" date="2003" name="J. Exp. Bot.">
        <title>Genetic manipulation of glycine decarboxylation.</title>
        <authorList>
            <person name="Bauwe H."/>
            <person name="Kolukisaoglu U."/>
        </authorList>
    </citation>
    <scope>REVIEW</scope>
    <scope>NOMENCLATURE</scope>
</reference>
<reference key="9">
    <citation type="journal article" date="2004" name="Plant Cell">
        <title>Experimental analysis of the Arabidopsis mitochondrial proteome highlights signaling and regulatory components, provides assessment of targeting prediction programs, and indicates plant-specific mitochondrial proteins.</title>
        <authorList>
            <person name="Heazlewood J.L."/>
            <person name="Tonti-Filippini J.S."/>
            <person name="Gout A.M."/>
            <person name="Day D.A."/>
            <person name="Whelan J."/>
            <person name="Millar A.H."/>
        </authorList>
    </citation>
    <scope>IDENTIFICATION BY MASS SPECTROMETRY</scope>
    <scope>SUBCELLULAR LOCATION [LARGE SCALE ANALYSIS]</scope>
    <source>
        <strain>cv. Landsberg erecta</strain>
    </source>
</reference>
<reference key="10">
    <citation type="journal article" date="2004" name="Plant Physiol.">
        <title>Lipoic acid-dependent oxidative catabolism of alpha-keto acids in mitochondria provides evidence for branched-chain amino acid catabolism in Arabidopsis.</title>
        <authorList>
            <person name="Taylor N.L."/>
            <person name="Heazlewood J.L."/>
            <person name="Day D.A."/>
            <person name="Millar A.H."/>
        </authorList>
    </citation>
    <scope>FUNCTION</scope>
    <scope>IDENTIFICATION BY MASS SPECTROMETRY</scope>
    <scope>SUBCELLULAR LOCATION</scope>
</reference>
<reference key="11">
    <citation type="journal article" date="2006" name="Proteomics">
        <title>The early responses of Arabidopsis thaliana cells to cadmium exposure explored by protein and metabolite profiling analyses.</title>
        <authorList>
            <person name="Sarry J.-E."/>
            <person name="Kuhn L."/>
            <person name="Ducruix C."/>
            <person name="Lafaye A."/>
            <person name="Junot C."/>
            <person name="Hugouvieux V."/>
            <person name="Jourdain A."/>
            <person name="Bastien O."/>
            <person name="Fievet J.B."/>
            <person name="Vailhen D."/>
            <person name="Amekraz B."/>
            <person name="Moulin C."/>
            <person name="Ezan E."/>
            <person name="Garin J."/>
            <person name="Bourguignon J."/>
        </authorList>
    </citation>
    <scope>INDUCTION BY CADMIUM</scope>
    <source>
        <strain>cv. Columbia</strain>
    </source>
</reference>
<reference key="12">
    <citation type="journal article" date="2010" name="Plant Physiol.">
        <title>Regulation of plant glycine decarboxylase by s-nitrosylation and glutathionylation.</title>
        <authorList>
            <person name="Palmieri M.C."/>
            <person name="Lindermayr C."/>
            <person name="Bauwe H."/>
            <person name="Steinhauser C."/>
            <person name="Durner J."/>
        </authorList>
    </citation>
    <scope>S-NITROSYLATION</scope>
</reference>
<reference key="13">
    <citation type="journal article" date="2015" name="J. Exp. Bot.">
        <title>Identification of cleavage sites and substrate proteins for two mitochondrial intermediate peptidases in Arabidopsis thaliana.</title>
        <authorList>
            <person name="Carrie C."/>
            <person name="Venne A.S."/>
            <person name="Zahedi R.P."/>
            <person name="Soll J."/>
        </authorList>
    </citation>
    <scope>IDENTIFICATION BY MASS SPECTROMETRY</scope>
    <scope>CLEAVAGE OF TRANSIT PEPTIDE AFTER PHE-36</scope>
</reference>